<feature type="chain" id="PRO_0000254490" description="ATP synthase subunit beta, chloroplastic">
    <location>
        <begin position="1"/>
        <end position="490"/>
    </location>
</feature>
<feature type="binding site" evidence="1">
    <location>
        <begin position="170"/>
        <end position="177"/>
    </location>
    <ligand>
        <name>ATP</name>
        <dbReference type="ChEBI" id="CHEBI:30616"/>
    </ligand>
</feature>
<reference key="1">
    <citation type="journal article" date="2002" name="Am. J. Bot.">
        <title>Monophyly of the Convolvulaceae and circumscription of their major lineages based on DNA sequences of multiple chloroplast loci.</title>
        <authorList>
            <person name="Stefanovic S."/>
            <person name="Krueger L."/>
            <person name="Olmstead R.G."/>
        </authorList>
        <dbReference type="AGRICOLA" id="IND23320510"/>
    </citation>
    <scope>NUCLEOTIDE SEQUENCE [GENOMIC DNA]</scope>
</reference>
<dbReference type="EC" id="7.1.2.2" evidence="1"/>
<dbReference type="EMBL" id="AY100750">
    <property type="protein sequence ID" value="AAM52104.1"/>
    <property type="molecule type" value="Genomic_DNA"/>
</dbReference>
<dbReference type="SMR" id="Q7H8M1"/>
<dbReference type="GO" id="GO:0009535">
    <property type="term" value="C:chloroplast thylakoid membrane"/>
    <property type="evidence" value="ECO:0007669"/>
    <property type="project" value="UniProtKB-SubCell"/>
</dbReference>
<dbReference type="GO" id="GO:0005739">
    <property type="term" value="C:mitochondrion"/>
    <property type="evidence" value="ECO:0007669"/>
    <property type="project" value="GOC"/>
</dbReference>
<dbReference type="GO" id="GO:0045259">
    <property type="term" value="C:proton-transporting ATP synthase complex"/>
    <property type="evidence" value="ECO:0007669"/>
    <property type="project" value="UniProtKB-KW"/>
</dbReference>
<dbReference type="GO" id="GO:0005524">
    <property type="term" value="F:ATP binding"/>
    <property type="evidence" value="ECO:0007669"/>
    <property type="project" value="UniProtKB-UniRule"/>
</dbReference>
<dbReference type="GO" id="GO:0016887">
    <property type="term" value="F:ATP hydrolysis activity"/>
    <property type="evidence" value="ECO:0007669"/>
    <property type="project" value="InterPro"/>
</dbReference>
<dbReference type="GO" id="GO:0046933">
    <property type="term" value="F:proton-transporting ATP synthase activity, rotational mechanism"/>
    <property type="evidence" value="ECO:0007669"/>
    <property type="project" value="UniProtKB-UniRule"/>
</dbReference>
<dbReference type="GO" id="GO:0042776">
    <property type="term" value="P:proton motive force-driven mitochondrial ATP synthesis"/>
    <property type="evidence" value="ECO:0007669"/>
    <property type="project" value="TreeGrafter"/>
</dbReference>
<dbReference type="CDD" id="cd18110">
    <property type="entry name" value="ATP-synt_F1_beta_C"/>
    <property type="match status" value="1"/>
</dbReference>
<dbReference type="CDD" id="cd18115">
    <property type="entry name" value="ATP-synt_F1_beta_N"/>
    <property type="match status" value="1"/>
</dbReference>
<dbReference type="CDD" id="cd01133">
    <property type="entry name" value="F1-ATPase_beta_CD"/>
    <property type="match status" value="1"/>
</dbReference>
<dbReference type="FunFam" id="1.10.1140.10:FF:000001">
    <property type="entry name" value="ATP synthase subunit beta"/>
    <property type="match status" value="1"/>
</dbReference>
<dbReference type="FunFam" id="3.40.50.12240:FF:000006">
    <property type="entry name" value="ATP synthase subunit beta"/>
    <property type="match status" value="1"/>
</dbReference>
<dbReference type="FunFam" id="3.40.50.300:FF:000004">
    <property type="entry name" value="ATP synthase subunit beta"/>
    <property type="match status" value="1"/>
</dbReference>
<dbReference type="FunFam" id="2.40.10.170:FF:000002">
    <property type="entry name" value="ATP synthase subunit beta, chloroplastic"/>
    <property type="match status" value="1"/>
</dbReference>
<dbReference type="Gene3D" id="2.40.10.170">
    <property type="match status" value="1"/>
</dbReference>
<dbReference type="Gene3D" id="1.10.1140.10">
    <property type="entry name" value="Bovine Mitochondrial F1-atpase, Atp Synthase Beta Chain, Chain D, domain 3"/>
    <property type="match status" value="1"/>
</dbReference>
<dbReference type="Gene3D" id="3.40.50.300">
    <property type="entry name" value="P-loop containing nucleotide triphosphate hydrolases"/>
    <property type="match status" value="1"/>
</dbReference>
<dbReference type="HAMAP" id="MF_01347">
    <property type="entry name" value="ATP_synth_beta_bact"/>
    <property type="match status" value="1"/>
</dbReference>
<dbReference type="InterPro" id="IPR003593">
    <property type="entry name" value="AAA+_ATPase"/>
</dbReference>
<dbReference type="InterPro" id="IPR055190">
    <property type="entry name" value="ATP-synt_VA_C"/>
</dbReference>
<dbReference type="InterPro" id="IPR005722">
    <property type="entry name" value="ATP_synth_F1_bsu"/>
</dbReference>
<dbReference type="InterPro" id="IPR020003">
    <property type="entry name" value="ATPase_a/bsu_AS"/>
</dbReference>
<dbReference type="InterPro" id="IPR050053">
    <property type="entry name" value="ATPase_alpha/beta_chains"/>
</dbReference>
<dbReference type="InterPro" id="IPR004100">
    <property type="entry name" value="ATPase_F1/V1/A1_a/bsu_N"/>
</dbReference>
<dbReference type="InterPro" id="IPR036121">
    <property type="entry name" value="ATPase_F1/V1/A1_a/bsu_N_sf"/>
</dbReference>
<dbReference type="InterPro" id="IPR000194">
    <property type="entry name" value="ATPase_F1/V1/A1_a/bsu_nucl-bd"/>
</dbReference>
<dbReference type="InterPro" id="IPR024034">
    <property type="entry name" value="ATPase_F1/V1_b/a_C"/>
</dbReference>
<dbReference type="InterPro" id="IPR027417">
    <property type="entry name" value="P-loop_NTPase"/>
</dbReference>
<dbReference type="NCBIfam" id="TIGR01039">
    <property type="entry name" value="atpD"/>
    <property type="match status" value="1"/>
</dbReference>
<dbReference type="PANTHER" id="PTHR15184">
    <property type="entry name" value="ATP SYNTHASE"/>
    <property type="match status" value="1"/>
</dbReference>
<dbReference type="PANTHER" id="PTHR15184:SF71">
    <property type="entry name" value="ATP SYNTHASE SUBUNIT BETA, MITOCHONDRIAL"/>
    <property type="match status" value="1"/>
</dbReference>
<dbReference type="Pfam" id="PF00006">
    <property type="entry name" value="ATP-synt_ab"/>
    <property type="match status" value="1"/>
</dbReference>
<dbReference type="Pfam" id="PF02874">
    <property type="entry name" value="ATP-synt_ab_N"/>
    <property type="match status" value="1"/>
</dbReference>
<dbReference type="Pfam" id="PF22919">
    <property type="entry name" value="ATP-synt_VA_C"/>
    <property type="match status" value="1"/>
</dbReference>
<dbReference type="SMART" id="SM00382">
    <property type="entry name" value="AAA"/>
    <property type="match status" value="1"/>
</dbReference>
<dbReference type="SUPFAM" id="SSF47917">
    <property type="entry name" value="C-terminal domain of alpha and beta subunits of F1 ATP synthase"/>
    <property type="match status" value="1"/>
</dbReference>
<dbReference type="SUPFAM" id="SSF50615">
    <property type="entry name" value="N-terminal domain of alpha and beta subunits of F1 ATP synthase"/>
    <property type="match status" value="1"/>
</dbReference>
<dbReference type="SUPFAM" id="SSF52540">
    <property type="entry name" value="P-loop containing nucleoside triphosphate hydrolases"/>
    <property type="match status" value="1"/>
</dbReference>
<dbReference type="PROSITE" id="PS00152">
    <property type="entry name" value="ATPASE_ALPHA_BETA"/>
    <property type="match status" value="1"/>
</dbReference>
<name>ATPB_IPOSE</name>
<evidence type="ECO:0000255" key="1">
    <source>
        <dbReference type="HAMAP-Rule" id="MF_01347"/>
    </source>
</evidence>
<accession>Q7H8M1</accession>
<proteinExistence type="inferred from homology"/>
<protein>
    <recommendedName>
        <fullName evidence="1">ATP synthase subunit beta, chloroplastic</fullName>
        <ecNumber evidence="1">7.1.2.2</ecNumber>
    </recommendedName>
    <alternativeName>
        <fullName evidence="1">ATP synthase F1 sector subunit beta</fullName>
    </alternativeName>
    <alternativeName>
        <fullName evidence="1">F-ATPase subunit beta</fullName>
    </alternativeName>
</protein>
<organism>
    <name type="scientific">Ipomoea setosa</name>
    <name type="common">Brazilian morning glory</name>
    <dbReference type="NCBI Taxonomy" id="89662"/>
    <lineage>
        <taxon>Eukaryota</taxon>
        <taxon>Viridiplantae</taxon>
        <taxon>Streptophyta</taxon>
        <taxon>Embryophyta</taxon>
        <taxon>Tracheophyta</taxon>
        <taxon>Spermatophyta</taxon>
        <taxon>Magnoliopsida</taxon>
        <taxon>eudicotyledons</taxon>
        <taxon>Gunneridae</taxon>
        <taxon>Pentapetalae</taxon>
        <taxon>asterids</taxon>
        <taxon>lamiids</taxon>
        <taxon>Solanales</taxon>
        <taxon>Convolvulaceae</taxon>
        <taxon>Ipomoeeae</taxon>
        <taxon>Ipomoea</taxon>
    </lineage>
</organism>
<sequence>MRINPTTSGSEVSAVEKKNLGRIVKIIGPVLDVAFPPGKMPNIYNALVVQGRGNEQTNVTCEVQQLLGNNRVRAVAMSDTDGLMRGMEVIDTGAPISVPVGGSTLGRIFNVLGQPVDNLGPVDTNTTSPIHRSAPAFIQLDTKLSIFETGIKVVDLLAPYRRGGKIGLFGGAGVGKTVLIMELINNIAKAHGGVSVFGGVGERTREGNDLYLEMKESGVINEENIPESKVALVYGQMNEPPGARMRVGLTALTMAEYFRDVNEQDVLLFIDNIFRFVQAGSEVSALLGRMPSAVGYQPTLSTEMGSLQERITSTKEGSITSIQAVYVPADDLTDPAPATTFAHLDATTVLSRGLAAKGIYPAVDPLDSTSTMLQPRIVGEEHYETAQRVKQTLQRYKELQDIIAILGLDELSEEDRLTVARARKIERFLSQPFFVAEVFTGSPGKYVGLAETIRGFQLILSGELDGLPEQAFYLVGNIDEATAKAMNLKT</sequence>
<keyword id="KW-0066">ATP synthesis</keyword>
<keyword id="KW-0067">ATP-binding</keyword>
<keyword id="KW-0139">CF(1)</keyword>
<keyword id="KW-0150">Chloroplast</keyword>
<keyword id="KW-0375">Hydrogen ion transport</keyword>
<keyword id="KW-0406">Ion transport</keyword>
<keyword id="KW-0472">Membrane</keyword>
<keyword id="KW-0547">Nucleotide-binding</keyword>
<keyword id="KW-0934">Plastid</keyword>
<keyword id="KW-0793">Thylakoid</keyword>
<keyword id="KW-1278">Translocase</keyword>
<keyword id="KW-0813">Transport</keyword>
<geneLocation type="chloroplast"/>
<comment type="function">
    <text evidence="1">Produces ATP from ADP in the presence of a proton gradient across the membrane. The catalytic sites are hosted primarily by the beta subunits.</text>
</comment>
<comment type="catalytic activity">
    <reaction evidence="1">
        <text>ATP + H2O + 4 H(+)(in) = ADP + phosphate + 5 H(+)(out)</text>
        <dbReference type="Rhea" id="RHEA:57720"/>
        <dbReference type="ChEBI" id="CHEBI:15377"/>
        <dbReference type="ChEBI" id="CHEBI:15378"/>
        <dbReference type="ChEBI" id="CHEBI:30616"/>
        <dbReference type="ChEBI" id="CHEBI:43474"/>
        <dbReference type="ChEBI" id="CHEBI:456216"/>
        <dbReference type="EC" id="7.1.2.2"/>
    </reaction>
</comment>
<comment type="subunit">
    <text evidence="1">F-type ATPases have 2 components, CF(1) - the catalytic core - and CF(0) - the membrane proton channel. CF(1) has five subunits: alpha(3), beta(3), gamma(1), delta(1), epsilon(1). CF(0) has four main subunits: a(1), b(1), b'(1) and c(9-12).</text>
</comment>
<comment type="subcellular location">
    <subcellularLocation>
        <location evidence="1">Plastid</location>
        <location evidence="1">Chloroplast thylakoid membrane</location>
        <topology evidence="1">Peripheral membrane protein</topology>
    </subcellularLocation>
</comment>
<comment type="similarity">
    <text evidence="1">Belongs to the ATPase alpha/beta chains family.</text>
</comment>
<gene>
    <name evidence="1" type="primary">atpB</name>
</gene>